<sequence length="196" mass="22801">MASTSLCAANPSASQNLRKVSGFVENKTTQCSFSIESILGLEQKKDGAAVKPHRPWMDGCMHQLGDPHLQIPVVSYENSLFHANSNLMQEEKVLNCEKYFSVTVTERLSFKRELSWYRGRRPRTAFTRNQIEVLENVFKMNSYPGIDIREELARKLDLEEDRIQIWFQNRRAKLKRSHRESQFLMVKNNFTSSLLE</sequence>
<comment type="function">
    <text>May be involved in the early patterning of the most anterior region of the main embryonic body axis.</text>
</comment>
<comment type="subcellular location">
    <subcellularLocation>
        <location evidence="2">Nucleus</location>
    </subcellularLocation>
</comment>
<comment type="developmental stage">
    <text>Expressed within the most anterior region of the embryonic body axis during gastrulation and neurulation.</text>
</comment>
<comment type="similarity">
    <text evidence="2">Belongs to the ANF homeobox family.</text>
</comment>
<accession>P79775</accession>
<feature type="chain" id="PRO_0000048925" description="Homeobox protein ANF-1">
    <location>
        <begin position="1"/>
        <end position="196"/>
    </location>
</feature>
<feature type="DNA-binding region" description="Homeobox" evidence="1">
    <location>
        <begin position="119"/>
        <end position="178"/>
    </location>
</feature>
<proteinExistence type="evidence at transcript level"/>
<reference key="1">
    <citation type="submission" date="1998-06" db="EMBL/GenBank/DDBJ databases">
        <authorList>
            <person name="Kazanskaya O.V."/>
            <person name="Severtzova E.A."/>
            <person name="Barth K.A."/>
            <person name="Ermakova G.V."/>
            <person name="Lukyanov S.A."/>
            <person name="Benyumov A.O."/>
            <person name="Pannese M."/>
            <person name="Boncinelli E."/>
            <person name="Wilson S.W."/>
            <person name="Zaraisky A.G."/>
        </authorList>
    </citation>
    <scope>NUCLEOTIDE SEQUENCE [MRNA]</scope>
</reference>
<reference key="2">
    <citation type="journal article" date="1997" name="Gene">
        <title>Anf: a novel class of vertebrate homeobox genes expressed at the anterior end of the main embryonic axis.</title>
        <authorList>
            <person name="Kazanskaya O.V."/>
            <person name="Severtzova E.A."/>
            <person name="Barth K.A."/>
            <person name="Ermakova G.V."/>
            <person name="Lukyanov S.A."/>
            <person name="Benyumov A.O."/>
            <person name="Pannese M."/>
            <person name="Boncinelli E."/>
            <person name="Wilson S.W."/>
            <person name="Zaraisky A.G."/>
        </authorList>
    </citation>
    <scope>PRELIMINARY NUCLEOTIDE SEQUENCE OF 8-196</scope>
    <source>
        <tissue>Forebrain</tissue>
    </source>
</reference>
<evidence type="ECO:0000255" key="1">
    <source>
        <dbReference type="PROSITE-ProRule" id="PRU00108"/>
    </source>
</evidence>
<evidence type="ECO:0000305" key="2"/>
<name>ANF1_CHICK</name>
<keyword id="KW-0217">Developmental protein</keyword>
<keyword id="KW-0238">DNA-binding</keyword>
<keyword id="KW-0371">Homeobox</keyword>
<keyword id="KW-0539">Nucleus</keyword>
<keyword id="KW-1185">Reference proteome</keyword>
<protein>
    <recommendedName>
        <fullName>Homeobox protein ANF-1</fullName>
    </recommendedName>
    <alternativeName>
        <fullName>GANF</fullName>
    </alternativeName>
</protein>
<organism>
    <name type="scientific">Gallus gallus</name>
    <name type="common">Chicken</name>
    <dbReference type="NCBI Taxonomy" id="9031"/>
    <lineage>
        <taxon>Eukaryota</taxon>
        <taxon>Metazoa</taxon>
        <taxon>Chordata</taxon>
        <taxon>Craniata</taxon>
        <taxon>Vertebrata</taxon>
        <taxon>Euteleostomi</taxon>
        <taxon>Archelosauria</taxon>
        <taxon>Archosauria</taxon>
        <taxon>Dinosauria</taxon>
        <taxon>Saurischia</taxon>
        <taxon>Theropoda</taxon>
        <taxon>Coelurosauria</taxon>
        <taxon>Aves</taxon>
        <taxon>Neognathae</taxon>
        <taxon>Galloanserae</taxon>
        <taxon>Galliformes</taxon>
        <taxon>Phasianidae</taxon>
        <taxon>Phasianinae</taxon>
        <taxon>Gallus</taxon>
    </lineage>
</organism>
<dbReference type="EMBL" id="U65436">
    <property type="protein sequence ID" value="AAC24899.1"/>
    <property type="molecule type" value="mRNA"/>
</dbReference>
<dbReference type="SMR" id="P79775"/>
<dbReference type="FunCoup" id="P79775">
    <property type="interactions" value="164"/>
</dbReference>
<dbReference type="STRING" id="9031.ENSGALP00000059106"/>
<dbReference type="PaxDb" id="9031-ENSGALP00000008823"/>
<dbReference type="VEuPathDB" id="HostDB:geneid_395864"/>
<dbReference type="eggNOG" id="KOG0490">
    <property type="taxonomic scope" value="Eukaryota"/>
</dbReference>
<dbReference type="InParanoid" id="P79775"/>
<dbReference type="PhylomeDB" id="P79775"/>
<dbReference type="PRO" id="PR:P79775"/>
<dbReference type="Proteomes" id="UP000000539">
    <property type="component" value="Unassembled WGS sequence"/>
</dbReference>
<dbReference type="GO" id="GO:0005634">
    <property type="term" value="C:nucleus"/>
    <property type="evidence" value="ECO:0000318"/>
    <property type="project" value="GO_Central"/>
</dbReference>
<dbReference type="GO" id="GO:0001227">
    <property type="term" value="F:DNA-binding transcription repressor activity, RNA polymerase II-specific"/>
    <property type="evidence" value="ECO:0000318"/>
    <property type="project" value="GO_Central"/>
</dbReference>
<dbReference type="GO" id="GO:0000978">
    <property type="term" value="F:RNA polymerase II cis-regulatory region sequence-specific DNA binding"/>
    <property type="evidence" value="ECO:0000318"/>
    <property type="project" value="GO_Central"/>
</dbReference>
<dbReference type="GO" id="GO:0021983">
    <property type="term" value="P:pituitary gland development"/>
    <property type="evidence" value="ECO:0000318"/>
    <property type="project" value="GO_Central"/>
</dbReference>
<dbReference type="GO" id="GO:0006357">
    <property type="term" value="P:regulation of transcription by RNA polymerase II"/>
    <property type="evidence" value="ECO:0000318"/>
    <property type="project" value="GO_Central"/>
</dbReference>
<dbReference type="CDD" id="cd00086">
    <property type="entry name" value="homeodomain"/>
    <property type="match status" value="1"/>
</dbReference>
<dbReference type="FunFam" id="1.10.10.60:FF:000214">
    <property type="entry name" value="Homeobox expressed in ES cells 1"/>
    <property type="match status" value="1"/>
</dbReference>
<dbReference type="Gene3D" id="1.10.10.60">
    <property type="entry name" value="Homeodomain-like"/>
    <property type="match status" value="1"/>
</dbReference>
<dbReference type="InterPro" id="IPR001356">
    <property type="entry name" value="HD"/>
</dbReference>
<dbReference type="InterPro" id="IPR043402">
    <property type="entry name" value="Hesx1"/>
</dbReference>
<dbReference type="InterPro" id="IPR017970">
    <property type="entry name" value="Homeobox_CS"/>
</dbReference>
<dbReference type="InterPro" id="IPR009057">
    <property type="entry name" value="Homeodomain-like_sf"/>
</dbReference>
<dbReference type="PANTHER" id="PTHR46966">
    <property type="entry name" value="HOMEOBOX EXPRESSED IN ES CELLS 1"/>
    <property type="match status" value="1"/>
</dbReference>
<dbReference type="PANTHER" id="PTHR46966:SF1">
    <property type="entry name" value="HOMEOBOX EXPRESSED IN ES CELLS 1"/>
    <property type="match status" value="1"/>
</dbReference>
<dbReference type="Pfam" id="PF00046">
    <property type="entry name" value="Homeodomain"/>
    <property type="match status" value="1"/>
</dbReference>
<dbReference type="SMART" id="SM00389">
    <property type="entry name" value="HOX"/>
    <property type="match status" value="1"/>
</dbReference>
<dbReference type="SUPFAM" id="SSF46689">
    <property type="entry name" value="Homeodomain-like"/>
    <property type="match status" value="1"/>
</dbReference>
<dbReference type="PROSITE" id="PS00027">
    <property type="entry name" value="HOMEOBOX_1"/>
    <property type="match status" value="1"/>
</dbReference>
<dbReference type="PROSITE" id="PS50071">
    <property type="entry name" value="HOMEOBOX_2"/>
    <property type="match status" value="1"/>
</dbReference>